<protein>
    <recommendedName>
        <fullName evidence="1">Probable transcriptional regulatory protein Francci3_1368</fullName>
    </recommendedName>
</protein>
<dbReference type="EMBL" id="CP000249">
    <property type="protein sequence ID" value="ABD10745.1"/>
    <property type="molecule type" value="Genomic_DNA"/>
</dbReference>
<dbReference type="RefSeq" id="WP_011435810.1">
    <property type="nucleotide sequence ID" value="NZ_JENI01000007.1"/>
</dbReference>
<dbReference type="SMR" id="Q2JD97"/>
<dbReference type="STRING" id="106370.Francci3_1368"/>
<dbReference type="KEGG" id="fra:Francci3_1368"/>
<dbReference type="eggNOG" id="COG0217">
    <property type="taxonomic scope" value="Bacteria"/>
</dbReference>
<dbReference type="HOGENOM" id="CLU_062974_2_2_11"/>
<dbReference type="OrthoDB" id="9781053at2"/>
<dbReference type="PhylomeDB" id="Q2JD97"/>
<dbReference type="Proteomes" id="UP000001937">
    <property type="component" value="Chromosome"/>
</dbReference>
<dbReference type="GO" id="GO:0005829">
    <property type="term" value="C:cytosol"/>
    <property type="evidence" value="ECO:0007669"/>
    <property type="project" value="TreeGrafter"/>
</dbReference>
<dbReference type="GO" id="GO:0003677">
    <property type="term" value="F:DNA binding"/>
    <property type="evidence" value="ECO:0007669"/>
    <property type="project" value="UniProtKB-UniRule"/>
</dbReference>
<dbReference type="GO" id="GO:0006355">
    <property type="term" value="P:regulation of DNA-templated transcription"/>
    <property type="evidence" value="ECO:0007669"/>
    <property type="project" value="UniProtKB-UniRule"/>
</dbReference>
<dbReference type="FunFam" id="1.10.10.200:FF:000002">
    <property type="entry name" value="Probable transcriptional regulatory protein CLM62_37755"/>
    <property type="match status" value="1"/>
</dbReference>
<dbReference type="Gene3D" id="1.10.10.200">
    <property type="match status" value="1"/>
</dbReference>
<dbReference type="Gene3D" id="3.30.70.980">
    <property type="match status" value="2"/>
</dbReference>
<dbReference type="HAMAP" id="MF_00693">
    <property type="entry name" value="Transcrip_reg_TACO1"/>
    <property type="match status" value="1"/>
</dbReference>
<dbReference type="InterPro" id="IPR017856">
    <property type="entry name" value="Integrase-like_N"/>
</dbReference>
<dbReference type="InterPro" id="IPR048300">
    <property type="entry name" value="TACO1_YebC-like_2nd/3rd_dom"/>
</dbReference>
<dbReference type="InterPro" id="IPR049083">
    <property type="entry name" value="TACO1_YebC_N"/>
</dbReference>
<dbReference type="InterPro" id="IPR002876">
    <property type="entry name" value="Transcrip_reg_TACO1-like"/>
</dbReference>
<dbReference type="InterPro" id="IPR026564">
    <property type="entry name" value="Transcrip_reg_TACO1-like_dom3"/>
</dbReference>
<dbReference type="InterPro" id="IPR029072">
    <property type="entry name" value="YebC-like"/>
</dbReference>
<dbReference type="NCBIfam" id="NF001030">
    <property type="entry name" value="PRK00110.1"/>
    <property type="match status" value="1"/>
</dbReference>
<dbReference type="NCBIfam" id="NF009044">
    <property type="entry name" value="PRK12378.1"/>
    <property type="match status" value="1"/>
</dbReference>
<dbReference type="NCBIfam" id="TIGR01033">
    <property type="entry name" value="YebC/PmpR family DNA-binding transcriptional regulator"/>
    <property type="match status" value="1"/>
</dbReference>
<dbReference type="PANTHER" id="PTHR12532:SF6">
    <property type="entry name" value="TRANSCRIPTIONAL REGULATORY PROTEIN YEBC-RELATED"/>
    <property type="match status" value="1"/>
</dbReference>
<dbReference type="PANTHER" id="PTHR12532">
    <property type="entry name" value="TRANSLATIONAL ACTIVATOR OF CYTOCHROME C OXIDASE 1"/>
    <property type="match status" value="1"/>
</dbReference>
<dbReference type="Pfam" id="PF20772">
    <property type="entry name" value="TACO1_YebC_N"/>
    <property type="match status" value="1"/>
</dbReference>
<dbReference type="Pfam" id="PF01709">
    <property type="entry name" value="Transcrip_reg"/>
    <property type="match status" value="1"/>
</dbReference>
<dbReference type="SUPFAM" id="SSF75625">
    <property type="entry name" value="YebC-like"/>
    <property type="match status" value="1"/>
</dbReference>
<keyword id="KW-0963">Cytoplasm</keyword>
<keyword id="KW-0238">DNA-binding</keyword>
<keyword id="KW-1185">Reference proteome</keyword>
<keyword id="KW-0804">Transcription</keyword>
<keyword id="KW-0805">Transcription regulation</keyword>
<proteinExistence type="inferred from homology"/>
<accession>Q2JD97</accession>
<comment type="subcellular location">
    <subcellularLocation>
        <location evidence="1">Cytoplasm</location>
    </subcellularLocation>
</comment>
<comment type="similarity">
    <text evidence="1">Belongs to the TACO1 family.</text>
</comment>
<feature type="chain" id="PRO_0000257068" description="Probable transcriptional regulatory protein Francci3_1368">
    <location>
        <begin position="1"/>
        <end position="251"/>
    </location>
</feature>
<name>Y1368_FRACC</name>
<evidence type="ECO:0000255" key="1">
    <source>
        <dbReference type="HAMAP-Rule" id="MF_00693"/>
    </source>
</evidence>
<reference key="1">
    <citation type="journal article" date="2007" name="Genome Res.">
        <title>Genome characteristics of facultatively symbiotic Frankia sp. strains reflect host range and host plant biogeography.</title>
        <authorList>
            <person name="Normand P."/>
            <person name="Lapierre P."/>
            <person name="Tisa L.S."/>
            <person name="Gogarten J.P."/>
            <person name="Alloisio N."/>
            <person name="Bagnarol E."/>
            <person name="Bassi C.A."/>
            <person name="Berry A.M."/>
            <person name="Bickhart D.M."/>
            <person name="Choisne N."/>
            <person name="Couloux A."/>
            <person name="Cournoyer B."/>
            <person name="Cruveiller S."/>
            <person name="Daubin V."/>
            <person name="Demange N."/>
            <person name="Francino M.P."/>
            <person name="Goltsman E."/>
            <person name="Huang Y."/>
            <person name="Kopp O.R."/>
            <person name="Labarre L."/>
            <person name="Lapidus A."/>
            <person name="Lavire C."/>
            <person name="Marechal J."/>
            <person name="Martinez M."/>
            <person name="Mastronunzio J.E."/>
            <person name="Mullin B.C."/>
            <person name="Niemann J."/>
            <person name="Pujic P."/>
            <person name="Rawnsley T."/>
            <person name="Rouy Z."/>
            <person name="Schenowitz C."/>
            <person name="Sellstedt A."/>
            <person name="Tavares F."/>
            <person name="Tomkins J.P."/>
            <person name="Vallenet D."/>
            <person name="Valverde C."/>
            <person name="Wall L.G."/>
            <person name="Wang Y."/>
            <person name="Medigue C."/>
            <person name="Benson D.R."/>
        </authorList>
    </citation>
    <scope>NUCLEOTIDE SEQUENCE [LARGE SCALE GENOMIC DNA]</scope>
    <source>
        <strain>DSM 45818 / CECT 9043 / HFP020203 / CcI3</strain>
    </source>
</reference>
<gene>
    <name type="ordered locus">Francci3_1368</name>
</gene>
<organism>
    <name type="scientific">Frankia casuarinae (strain DSM 45818 / CECT 9043 / HFP020203 / CcI3)</name>
    <dbReference type="NCBI Taxonomy" id="106370"/>
    <lineage>
        <taxon>Bacteria</taxon>
        <taxon>Bacillati</taxon>
        <taxon>Actinomycetota</taxon>
        <taxon>Actinomycetes</taxon>
        <taxon>Frankiales</taxon>
        <taxon>Frankiaceae</taxon>
        <taxon>Frankia</taxon>
    </lineage>
</organism>
<sequence>MSGHSKWATTKHKKAVIDARRGKLFAKLIKTVEVAAKTGGGDPAGNPTLADAIAKAKSQSVPNDNIERAVKRGSGELAGGVNYEDITYEAYGPGGVAILVECLTDNRNRAASDVRVAITRNGGTVADPGSVSYLFNRKGVVLIEKTAGLTEDDVLLAVLDAGAEEVNDVGEAFEVVSEATDLHAVRVAATDAGLAVTSADISWLPSVSVSLEAEPAAKVLKLIEAVEDLDDVQNVWFNADISDDVMELVGS</sequence>